<proteinExistence type="evidence at protein level"/>
<feature type="chain" id="PRO_0000141087" description="Ribose-phosphate pyrophosphokinase 2">
    <location>
        <begin position="1"/>
        <end position="318"/>
    </location>
</feature>
<feature type="binding site" evidence="1">
    <location>
        <position position="132"/>
    </location>
    <ligand>
        <name>Mg(2+)</name>
        <dbReference type="ChEBI" id="CHEBI:18420"/>
    </ligand>
</feature>
<feature type="binding site" evidence="1">
    <location>
        <position position="134"/>
    </location>
    <ligand>
        <name>Mg(2+)</name>
        <dbReference type="ChEBI" id="CHEBI:18420"/>
    </ligand>
</feature>
<feature type="binding site" evidence="1">
    <location>
        <position position="143"/>
    </location>
    <ligand>
        <name>Mg(2+)</name>
        <dbReference type="ChEBI" id="CHEBI:18420"/>
    </ligand>
</feature>
<feature type="binding site" evidence="1">
    <location>
        <position position="147"/>
    </location>
    <ligand>
        <name>Mg(2+)</name>
        <dbReference type="ChEBI" id="CHEBI:18420"/>
    </ligand>
</feature>
<reference key="1">
    <citation type="journal article" date="1994" name="Yeast">
        <title>Phosphoribosylpyrophosphate synthetase (PRS): a new gene family in Saccharomyces cerevisiae.</title>
        <authorList>
            <person name="Carter A.T."/>
            <person name="Narbad A."/>
            <person name="Pearson B.M."/>
            <person name="Beck K.-F."/>
            <person name="Logghe M."/>
            <person name="Contreras R."/>
            <person name="Schweizer M."/>
        </authorList>
    </citation>
    <scope>NUCLEOTIDE SEQUENCE [GENOMIC DNA]</scope>
    <source>
        <strain>ATCC 44827 / SKQ2N</strain>
    </source>
</reference>
<reference key="2">
    <citation type="journal article" date="1995" name="Yeast">
        <authorList>
            <person name="Carter A.T."/>
            <person name="Narbad A."/>
            <person name="Pearson B.M."/>
            <person name="Beck K.-F."/>
            <person name="Logghe M."/>
            <person name="Contreras R."/>
            <person name="Schweizer M."/>
        </authorList>
    </citation>
    <scope>ERRATUM OF PUBMED:7992503</scope>
</reference>
<reference key="3">
    <citation type="journal article" date="2004" name="J. Biol. Chem.">
        <title>Heterooligomeric phosphoribosyl diphosphate synthase of Saccharomyces cerevisiae: combinatorial expression of the five PRS genes in Escherichia coli.</title>
        <authorList>
            <person name="Hove-Jensen B."/>
        </authorList>
    </citation>
    <scope>NUCLEOTIDE SEQUENCE [GENOMIC DNA]</scope>
    <scope>FUNCTION</scope>
    <scope>ENZYME ACTIVITY</scope>
</reference>
<reference key="4">
    <citation type="journal article" date="1997" name="Nature">
        <title>The nucleotide sequence of Saccharomyces cerevisiae chromosome V.</title>
        <authorList>
            <person name="Dietrich F.S."/>
            <person name="Mulligan J.T."/>
            <person name="Hennessy K.M."/>
            <person name="Yelton M.A."/>
            <person name="Allen E."/>
            <person name="Araujo R."/>
            <person name="Aviles E."/>
            <person name="Berno A."/>
            <person name="Brennan T."/>
            <person name="Carpenter J."/>
            <person name="Chen E."/>
            <person name="Cherry J.M."/>
            <person name="Chung E."/>
            <person name="Duncan M."/>
            <person name="Guzman E."/>
            <person name="Hartzell G."/>
            <person name="Hunicke-Smith S."/>
            <person name="Hyman R.W."/>
            <person name="Kayser A."/>
            <person name="Komp C."/>
            <person name="Lashkari D."/>
            <person name="Lew H."/>
            <person name="Lin D."/>
            <person name="Mosedale D."/>
            <person name="Nakahara K."/>
            <person name="Namath A."/>
            <person name="Norgren R."/>
            <person name="Oefner P."/>
            <person name="Oh C."/>
            <person name="Petel F.X."/>
            <person name="Roberts D."/>
            <person name="Sehl P."/>
            <person name="Schramm S."/>
            <person name="Shogren T."/>
            <person name="Smith V."/>
            <person name="Taylor P."/>
            <person name="Wei Y."/>
            <person name="Botstein D."/>
            <person name="Davis R.W."/>
        </authorList>
    </citation>
    <scope>NUCLEOTIDE SEQUENCE [LARGE SCALE GENOMIC DNA]</scope>
    <source>
        <strain>ATCC 204508 / S288c</strain>
    </source>
</reference>
<reference key="5">
    <citation type="journal article" date="2014" name="G3 (Bethesda)">
        <title>The reference genome sequence of Saccharomyces cerevisiae: Then and now.</title>
        <authorList>
            <person name="Engel S.R."/>
            <person name="Dietrich F.S."/>
            <person name="Fisk D.G."/>
            <person name="Binkley G."/>
            <person name="Balakrishnan R."/>
            <person name="Costanzo M.C."/>
            <person name="Dwight S.S."/>
            <person name="Hitz B.C."/>
            <person name="Karra K."/>
            <person name="Nash R.S."/>
            <person name="Weng S."/>
            <person name="Wong E.D."/>
            <person name="Lloyd P."/>
            <person name="Skrzypek M.S."/>
            <person name="Miyasato S.R."/>
            <person name="Simison M."/>
            <person name="Cherry J.M."/>
        </authorList>
    </citation>
    <scope>GENOME REANNOTATION</scope>
    <source>
        <strain>ATCC 204508 / S288c</strain>
    </source>
</reference>
<reference key="6">
    <citation type="journal article" date="2007" name="Genome Res.">
        <title>Approaching a complete repository of sequence-verified protein-encoding clones for Saccharomyces cerevisiae.</title>
        <authorList>
            <person name="Hu Y."/>
            <person name="Rolfs A."/>
            <person name="Bhullar B."/>
            <person name="Murthy T.V.S."/>
            <person name="Zhu C."/>
            <person name="Berger M.F."/>
            <person name="Camargo A.A."/>
            <person name="Kelley F."/>
            <person name="McCarron S."/>
            <person name="Jepson D."/>
            <person name="Richardson A."/>
            <person name="Raphael J."/>
            <person name="Moreira D."/>
            <person name="Taycher E."/>
            <person name="Zuo D."/>
            <person name="Mohr S."/>
            <person name="Kane M.F."/>
            <person name="Williamson J."/>
            <person name="Simpson A.J.G."/>
            <person name="Bulyk M.L."/>
            <person name="Harlow E."/>
            <person name="Marsischky G."/>
            <person name="Kolodner R.D."/>
            <person name="LaBaer J."/>
        </authorList>
    </citation>
    <scope>NUCLEOTIDE SEQUENCE [GENOMIC DNA]</scope>
    <source>
        <strain>ATCC 204508 / S288c</strain>
    </source>
</reference>
<reference key="7">
    <citation type="journal article" date="1999" name="J. Biol. Chem.">
        <title>Genetic analysis and enzyme activity suggest the existence of more than one minimal functional unit capable of synthesizing phosphoribosyl pyrophosphate in Saccharomyces cerevisiae.</title>
        <authorList>
            <person name="Hernando Y."/>
            <person name="Carter A.T."/>
            <person name="Parr A."/>
            <person name="Hove-Jensen B."/>
            <person name="Schweizer M."/>
        </authorList>
    </citation>
    <scope>FUNCTION</scope>
    <scope>ENZYME ACTIVITY</scope>
</reference>
<reference key="8">
    <citation type="journal article" date="2003" name="Nature">
        <title>Global analysis of protein localization in budding yeast.</title>
        <authorList>
            <person name="Huh W.-K."/>
            <person name="Falvo J.V."/>
            <person name="Gerke L.C."/>
            <person name="Carroll A.S."/>
            <person name="Howson R.W."/>
            <person name="Weissman J.S."/>
            <person name="O'Shea E.K."/>
        </authorList>
    </citation>
    <scope>SUBCELLULAR LOCATION [LARGE SCALE ANALYSIS]</scope>
</reference>
<reference key="9">
    <citation type="journal article" date="2003" name="Nature">
        <title>Global analysis of protein expression in yeast.</title>
        <authorList>
            <person name="Ghaemmaghami S."/>
            <person name="Huh W.-K."/>
            <person name="Bower K."/>
            <person name="Howson R.W."/>
            <person name="Belle A."/>
            <person name="Dephoure N."/>
            <person name="O'Shea E.K."/>
            <person name="Weissman J.S."/>
        </authorList>
    </citation>
    <scope>LEVEL OF PROTEIN EXPRESSION [LARGE SCALE ANALYSIS]</scope>
</reference>
<dbReference type="EC" id="2.7.6.1"/>
<dbReference type="EMBL" id="X74414">
    <property type="protein sequence ID" value="CAA52436.1"/>
    <property type="molecule type" value="Genomic_DNA"/>
</dbReference>
<dbReference type="EMBL" id="X75075">
    <property type="protein sequence ID" value="CAA52969.1"/>
    <property type="molecule type" value="Genomic_DNA"/>
</dbReference>
<dbReference type="EMBL" id="U18839">
    <property type="protein sequence ID" value="AAB64654.1"/>
    <property type="molecule type" value="Genomic_DNA"/>
</dbReference>
<dbReference type="EMBL" id="AY692977">
    <property type="protein sequence ID" value="AAT92996.1"/>
    <property type="molecule type" value="Genomic_DNA"/>
</dbReference>
<dbReference type="EMBL" id="BK006939">
    <property type="protein sequence ID" value="DAA07760.1"/>
    <property type="molecule type" value="Genomic_DNA"/>
</dbReference>
<dbReference type="PIR" id="S37225">
    <property type="entry name" value="S37225"/>
</dbReference>
<dbReference type="RefSeq" id="NP_011025.3">
    <property type="nucleotide sequence ID" value="NM_001178990.3"/>
</dbReference>
<dbReference type="SMR" id="P38620"/>
<dbReference type="BioGRID" id="36845">
    <property type="interactions" value="130"/>
</dbReference>
<dbReference type="DIP" id="DIP-1482N"/>
<dbReference type="FunCoup" id="P38620">
    <property type="interactions" value="647"/>
</dbReference>
<dbReference type="IntAct" id="P38620">
    <property type="interactions" value="52"/>
</dbReference>
<dbReference type="MINT" id="P38620"/>
<dbReference type="STRING" id="4932.YER099C"/>
<dbReference type="iPTMnet" id="P38620"/>
<dbReference type="PaxDb" id="4932-YER099C"/>
<dbReference type="PeptideAtlas" id="P38620"/>
<dbReference type="EnsemblFungi" id="YER099C_mRNA">
    <property type="protein sequence ID" value="YER099C"/>
    <property type="gene ID" value="YER099C"/>
</dbReference>
<dbReference type="GeneID" id="856836"/>
<dbReference type="KEGG" id="sce:YER099C"/>
<dbReference type="AGR" id="SGD:S000000901"/>
<dbReference type="SGD" id="S000000901">
    <property type="gene designation" value="PRS2"/>
</dbReference>
<dbReference type="VEuPathDB" id="FungiDB:YER099C"/>
<dbReference type="eggNOG" id="KOG1448">
    <property type="taxonomic scope" value="Eukaryota"/>
</dbReference>
<dbReference type="GeneTree" id="ENSGT00950000182803"/>
<dbReference type="HOGENOM" id="CLU_033546_4_0_1"/>
<dbReference type="InParanoid" id="P38620"/>
<dbReference type="OMA" id="YFGWARQ"/>
<dbReference type="OrthoDB" id="413572at2759"/>
<dbReference type="BioCyc" id="YEAST:YER099C-MONOMER"/>
<dbReference type="Reactome" id="R-SCE-73843">
    <property type="pathway name" value="5-Phosphoribose 1-diphosphate biosynthesis"/>
</dbReference>
<dbReference type="UniPathway" id="UPA00087">
    <property type="reaction ID" value="UER00172"/>
</dbReference>
<dbReference type="BioGRID-ORCS" id="856836">
    <property type="hits" value="0 hits in 10 CRISPR screens"/>
</dbReference>
<dbReference type="PRO" id="PR:P38620"/>
<dbReference type="Proteomes" id="UP000002311">
    <property type="component" value="Chromosome V"/>
</dbReference>
<dbReference type="RNAct" id="P38620">
    <property type="molecule type" value="protein"/>
</dbReference>
<dbReference type="GO" id="GO:0005737">
    <property type="term" value="C:cytoplasm"/>
    <property type="evidence" value="ECO:0007005"/>
    <property type="project" value="SGD"/>
</dbReference>
<dbReference type="GO" id="GO:0002189">
    <property type="term" value="C:ribose phosphate diphosphokinase complex"/>
    <property type="evidence" value="ECO:0000314"/>
    <property type="project" value="SGD"/>
</dbReference>
<dbReference type="GO" id="GO:0005524">
    <property type="term" value="F:ATP binding"/>
    <property type="evidence" value="ECO:0007669"/>
    <property type="project" value="UniProtKB-KW"/>
</dbReference>
<dbReference type="GO" id="GO:0016301">
    <property type="term" value="F:kinase activity"/>
    <property type="evidence" value="ECO:0007669"/>
    <property type="project" value="UniProtKB-KW"/>
</dbReference>
<dbReference type="GO" id="GO:0000287">
    <property type="term" value="F:magnesium ion binding"/>
    <property type="evidence" value="ECO:0007669"/>
    <property type="project" value="InterPro"/>
</dbReference>
<dbReference type="GO" id="GO:0004749">
    <property type="term" value="F:ribose phosphate diphosphokinase activity"/>
    <property type="evidence" value="ECO:0007669"/>
    <property type="project" value="UniProtKB-EC"/>
</dbReference>
<dbReference type="GO" id="GO:0006015">
    <property type="term" value="P:5-phosphoribose 1-diphosphate biosynthetic process"/>
    <property type="evidence" value="ECO:0000315"/>
    <property type="project" value="SGD"/>
</dbReference>
<dbReference type="GO" id="GO:0006164">
    <property type="term" value="P:purine nucleotide biosynthetic process"/>
    <property type="evidence" value="ECO:0000318"/>
    <property type="project" value="GO_Central"/>
</dbReference>
<dbReference type="GO" id="GO:0009156">
    <property type="term" value="P:ribonucleoside monophosphate biosynthetic process"/>
    <property type="evidence" value="ECO:0007669"/>
    <property type="project" value="InterPro"/>
</dbReference>
<dbReference type="CDD" id="cd06223">
    <property type="entry name" value="PRTases_typeI"/>
    <property type="match status" value="1"/>
</dbReference>
<dbReference type="FunFam" id="3.40.50.2020:FF:000005">
    <property type="entry name" value="Ribose-phosphate pyrophosphokinase 1"/>
    <property type="match status" value="1"/>
</dbReference>
<dbReference type="FunFam" id="3.40.50.2020:FF:000014">
    <property type="entry name" value="Ribose-phosphate pyrophosphokinase 1"/>
    <property type="match status" value="1"/>
</dbReference>
<dbReference type="Gene3D" id="3.40.50.2020">
    <property type="match status" value="2"/>
</dbReference>
<dbReference type="InterPro" id="IPR000842">
    <property type="entry name" value="PRib_PP_synth_CS"/>
</dbReference>
<dbReference type="InterPro" id="IPR029099">
    <property type="entry name" value="Pribosyltran_N"/>
</dbReference>
<dbReference type="InterPro" id="IPR000836">
    <property type="entry name" value="PRibTrfase_dom"/>
</dbReference>
<dbReference type="InterPro" id="IPR029057">
    <property type="entry name" value="PRTase-like"/>
</dbReference>
<dbReference type="InterPro" id="IPR005946">
    <property type="entry name" value="Rib-P_diPkinase"/>
</dbReference>
<dbReference type="NCBIfam" id="NF002320">
    <property type="entry name" value="PRK01259.1"/>
    <property type="match status" value="1"/>
</dbReference>
<dbReference type="NCBIfam" id="TIGR01251">
    <property type="entry name" value="ribP_PPkin"/>
    <property type="match status" value="1"/>
</dbReference>
<dbReference type="PANTHER" id="PTHR10210">
    <property type="entry name" value="RIBOSE-PHOSPHATE DIPHOSPHOKINASE FAMILY MEMBER"/>
    <property type="match status" value="1"/>
</dbReference>
<dbReference type="PANTHER" id="PTHR10210:SF32">
    <property type="entry name" value="RIBOSE-PHOSPHATE PYROPHOSPHOKINASE 2"/>
    <property type="match status" value="1"/>
</dbReference>
<dbReference type="Pfam" id="PF14572">
    <property type="entry name" value="Pribosyl_synth"/>
    <property type="match status" value="1"/>
</dbReference>
<dbReference type="Pfam" id="PF13793">
    <property type="entry name" value="Pribosyltran_N"/>
    <property type="match status" value="1"/>
</dbReference>
<dbReference type="SMART" id="SM01400">
    <property type="entry name" value="Pribosyltran_N"/>
    <property type="match status" value="1"/>
</dbReference>
<dbReference type="SUPFAM" id="SSF53271">
    <property type="entry name" value="PRTase-like"/>
    <property type="match status" value="1"/>
</dbReference>
<dbReference type="PROSITE" id="PS00114">
    <property type="entry name" value="PRPP_SYNTHASE"/>
    <property type="match status" value="1"/>
</dbReference>
<evidence type="ECO:0000255" key="1"/>
<evidence type="ECO:0000269" key="2">
    <source>
    </source>
</evidence>
<evidence type="ECO:0000269" key="3">
    <source>
    </source>
</evidence>
<evidence type="ECO:0000269" key="4">
    <source>
    </source>
</evidence>
<evidence type="ECO:0000269" key="5">
    <source>
    </source>
</evidence>
<evidence type="ECO:0000305" key="6"/>
<organism>
    <name type="scientific">Saccharomyces cerevisiae (strain ATCC 204508 / S288c)</name>
    <name type="common">Baker's yeast</name>
    <dbReference type="NCBI Taxonomy" id="559292"/>
    <lineage>
        <taxon>Eukaryota</taxon>
        <taxon>Fungi</taxon>
        <taxon>Dikarya</taxon>
        <taxon>Ascomycota</taxon>
        <taxon>Saccharomycotina</taxon>
        <taxon>Saccharomycetes</taxon>
        <taxon>Saccharomycetales</taxon>
        <taxon>Saccharomycetaceae</taxon>
        <taxon>Saccharomyces</taxon>
    </lineage>
</organism>
<gene>
    <name type="primary">PRS2</name>
    <name type="synonym">PRPS2</name>
    <name type="synonym">PRS</name>
    <name type="ordered locus">YER099C</name>
</gene>
<accession>P38620</accession>
<accession>D3DM06</accession>
<protein>
    <recommendedName>
        <fullName>Ribose-phosphate pyrophosphokinase 2</fullName>
        <ecNumber>2.7.6.1</ecNumber>
    </recommendedName>
    <alternativeName>
        <fullName>Phosphoribosyl pyrophosphate synthase 2</fullName>
    </alternativeName>
</protein>
<keyword id="KW-0067">ATP-binding</keyword>
<keyword id="KW-0963">Cytoplasm</keyword>
<keyword id="KW-0418">Kinase</keyword>
<keyword id="KW-0460">Magnesium</keyword>
<keyword id="KW-0479">Metal-binding</keyword>
<keyword id="KW-0545">Nucleotide biosynthesis</keyword>
<keyword id="KW-0547">Nucleotide-binding</keyword>
<keyword id="KW-1185">Reference proteome</keyword>
<keyword id="KW-0808">Transferase</keyword>
<sequence length="318" mass="34765">MSTNSIKLLAGNSHPGLAELISQRLGVPLSKVGVYQYSNKETSVTIGESIRDEDVYIIQTGYGEHEINDFLMELLILIHACKTASVRRITAVIPNFPYARQDKKDKSRAPITAKLIANLLETAGCDHVITMDLHASQIQGFFHIPVDNLYGEPSVLNYIRTKTDFNNAILVSPDAGGAKRVASLADKLDMNFALIHKERQKANEVSRMLLVGDVAGKSCLLIDDMADTCGTLVKACDTLMDHGAKEVIAIVTHGIFSGSAREKLINSRLSRIVCTNTVPVDLDLDIVDQVDISPTIAEAIRRLHNGESVSYLFTHAPV</sequence>
<comment type="function">
    <text evidence="2 5">5-phosphoribose 1-diphosphate synthase involved in nucleotide, histidine, and tryptophan biosynthesis. Active in heteromultimeric complexes with other 5-phosphoribose 1-diphosphate synthases (PRS2, PRS3, PRS4 and PRS5).</text>
</comment>
<comment type="catalytic activity">
    <reaction evidence="2 5">
        <text>D-ribose 5-phosphate + ATP = 5-phospho-alpha-D-ribose 1-diphosphate + AMP + H(+)</text>
        <dbReference type="Rhea" id="RHEA:15609"/>
        <dbReference type="ChEBI" id="CHEBI:15378"/>
        <dbReference type="ChEBI" id="CHEBI:30616"/>
        <dbReference type="ChEBI" id="CHEBI:58017"/>
        <dbReference type="ChEBI" id="CHEBI:78346"/>
        <dbReference type="ChEBI" id="CHEBI:456215"/>
        <dbReference type="EC" id="2.7.6.1"/>
    </reaction>
</comment>
<comment type="pathway">
    <text>Metabolic intermediate biosynthesis; 5-phospho-alpha-D-ribose 1-diphosphate biosynthesis; 5-phospho-alpha-D-ribose 1-diphosphate from D-ribose 5-phosphate (route I): step 1/1.</text>
</comment>
<comment type="interaction">
    <interactant intactId="EBI-9873">
        <id>P38620</id>
    </interactant>
    <interactant intactId="EBI-9886">
        <id>Q12265</id>
        <label>PRS5</label>
    </interactant>
    <organismsDiffer>false</organismsDiffer>
    <experiments>3</experiments>
</comment>
<comment type="subcellular location">
    <subcellularLocation>
        <location evidence="3">Cytoplasm</location>
    </subcellularLocation>
</comment>
<comment type="miscellaneous">
    <text evidence="4">Present with 8120 molecules/cell in log phase SD medium.</text>
</comment>
<comment type="similarity">
    <text evidence="6">Belongs to the ribose-phosphate pyrophosphokinase family.</text>
</comment>
<name>KPR2_YEAST</name>